<name>PHEA_MYCSJ</name>
<proteinExistence type="inferred from homology"/>
<organism>
    <name type="scientific">Mycobacterium sp. (strain JLS)</name>
    <dbReference type="NCBI Taxonomy" id="164757"/>
    <lineage>
        <taxon>Bacteria</taxon>
        <taxon>Bacillati</taxon>
        <taxon>Actinomycetota</taxon>
        <taxon>Actinomycetes</taxon>
        <taxon>Mycobacteriales</taxon>
        <taxon>Mycobacteriaceae</taxon>
        <taxon>Mycobacterium</taxon>
    </lineage>
</organism>
<gene>
    <name type="primary">pheA</name>
    <name type="ordered locus">Mjls_5415</name>
</gene>
<accession>A3Q7Q1</accession>
<reference key="1">
    <citation type="submission" date="2007-02" db="EMBL/GenBank/DDBJ databases">
        <title>Complete sequence of Mycobacterium sp. JLS.</title>
        <authorList>
            <consortium name="US DOE Joint Genome Institute"/>
            <person name="Copeland A."/>
            <person name="Lucas S."/>
            <person name="Lapidus A."/>
            <person name="Barry K."/>
            <person name="Detter J.C."/>
            <person name="Glavina del Rio T."/>
            <person name="Hammon N."/>
            <person name="Israni S."/>
            <person name="Dalin E."/>
            <person name="Tice H."/>
            <person name="Pitluck S."/>
            <person name="Chain P."/>
            <person name="Malfatti S."/>
            <person name="Shin M."/>
            <person name="Vergez L."/>
            <person name="Schmutz J."/>
            <person name="Larimer F."/>
            <person name="Land M."/>
            <person name="Hauser L."/>
            <person name="Kyrpides N."/>
            <person name="Mikhailova N."/>
            <person name="Miller C.D."/>
            <person name="Anderson A.J."/>
            <person name="Sims R.C."/>
            <person name="Richardson P."/>
        </authorList>
    </citation>
    <scope>NUCLEOTIDE SEQUENCE [LARGE SCALE GENOMIC DNA]</scope>
    <source>
        <strain>JLS</strain>
    </source>
</reference>
<keyword id="KW-0028">Amino-acid biosynthesis</keyword>
<keyword id="KW-0057">Aromatic amino acid biosynthesis</keyword>
<keyword id="KW-0456">Lyase</keyword>
<keyword id="KW-0584">Phenylalanine biosynthesis</keyword>
<protein>
    <recommendedName>
        <fullName>Prephenate dehydratase</fullName>
        <shortName>PDT</shortName>
        <ecNumber>4.2.1.51</ecNumber>
    </recommendedName>
</protein>
<sequence>MPRIAYLGPQGTFTESALLQMISGAMVPGGDADDTAVTPVPTDSTPAGLEAVRSGAADYACVPIENSIEGSVLPTLDSLAVGAPLQIFAELTLAVSFSIVVRPDHDGDVATVAAFPVAAAQVRRWLAEHLPAAQLVPAHSNAAAAADVAGGRADAGISTALAAERYGLRSLAAGVVDEPNARTRFVLVGRPAPPPARTGADRTSVALRLPNTPGALVAAMTELSIRDIDLTRIESRPTRTELGTYVFFLDCVGHLEDDAVAEALKALHRRCEDVRYLGSWPTGTAAGAPPPSSDEATRWLTRLREGLPTPPEGGR</sequence>
<evidence type="ECO:0000250" key="1"/>
<evidence type="ECO:0000255" key="2">
    <source>
        <dbReference type="PROSITE-ProRule" id="PRU00517"/>
    </source>
</evidence>
<evidence type="ECO:0000255" key="3">
    <source>
        <dbReference type="PROSITE-ProRule" id="PRU01007"/>
    </source>
</evidence>
<feature type="chain" id="PRO_0000382040" description="Prephenate dehydratase">
    <location>
        <begin position="1"/>
        <end position="315"/>
    </location>
</feature>
<feature type="domain" description="Prephenate dehydratase" evidence="2">
    <location>
        <begin position="3"/>
        <end position="190"/>
    </location>
</feature>
<feature type="domain" description="ACT" evidence="3">
    <location>
        <begin position="204"/>
        <end position="281"/>
    </location>
</feature>
<feature type="site" description="Essential for activity" evidence="1">
    <location>
        <position position="183"/>
    </location>
</feature>
<dbReference type="EC" id="4.2.1.51"/>
<dbReference type="EMBL" id="CP000580">
    <property type="protein sequence ID" value="ABO01179.1"/>
    <property type="molecule type" value="Genomic_DNA"/>
</dbReference>
<dbReference type="SMR" id="A3Q7Q1"/>
<dbReference type="KEGG" id="mjl:Mjls_5415"/>
<dbReference type="HOGENOM" id="CLU_035008_0_0_11"/>
<dbReference type="BioCyc" id="MSP164757:G1G8C-5474-MONOMER"/>
<dbReference type="UniPathway" id="UPA00121">
    <property type="reaction ID" value="UER00345"/>
</dbReference>
<dbReference type="GO" id="GO:0005737">
    <property type="term" value="C:cytoplasm"/>
    <property type="evidence" value="ECO:0007669"/>
    <property type="project" value="TreeGrafter"/>
</dbReference>
<dbReference type="GO" id="GO:0004664">
    <property type="term" value="F:prephenate dehydratase activity"/>
    <property type="evidence" value="ECO:0007669"/>
    <property type="project" value="UniProtKB-EC"/>
</dbReference>
<dbReference type="GO" id="GO:0042803">
    <property type="term" value="F:protein homodimerization activity"/>
    <property type="evidence" value="ECO:0000250"/>
    <property type="project" value="UniProtKB"/>
</dbReference>
<dbReference type="GO" id="GO:0009094">
    <property type="term" value="P:L-phenylalanine biosynthetic process"/>
    <property type="evidence" value="ECO:0007669"/>
    <property type="project" value="UniProtKB-UniPathway"/>
</dbReference>
<dbReference type="CDD" id="cd04905">
    <property type="entry name" value="ACT_CM-PDT"/>
    <property type="match status" value="1"/>
</dbReference>
<dbReference type="CDD" id="cd13632">
    <property type="entry name" value="PBP2_Aa-PDT_like"/>
    <property type="match status" value="1"/>
</dbReference>
<dbReference type="FunFam" id="3.30.70.260:FF:000012">
    <property type="entry name" value="Prephenate dehydratase"/>
    <property type="match status" value="1"/>
</dbReference>
<dbReference type="FunFam" id="3.40.190.10:FF:000064">
    <property type="entry name" value="Prephenate dehydratase"/>
    <property type="match status" value="1"/>
</dbReference>
<dbReference type="FunFam" id="3.40.190.10:FF:000146">
    <property type="entry name" value="Prephenate dehydratase"/>
    <property type="match status" value="1"/>
</dbReference>
<dbReference type="Gene3D" id="3.30.70.260">
    <property type="match status" value="1"/>
</dbReference>
<dbReference type="Gene3D" id="3.40.190.10">
    <property type="entry name" value="Periplasmic binding protein-like II"/>
    <property type="match status" value="2"/>
</dbReference>
<dbReference type="InterPro" id="IPR045865">
    <property type="entry name" value="ACT-like_dom_sf"/>
</dbReference>
<dbReference type="InterPro" id="IPR002912">
    <property type="entry name" value="ACT_dom"/>
</dbReference>
<dbReference type="InterPro" id="IPR008242">
    <property type="entry name" value="Chor_mutase/pphenate_deHydtase"/>
</dbReference>
<dbReference type="InterPro" id="IPR001086">
    <property type="entry name" value="Preph_deHydtase"/>
</dbReference>
<dbReference type="InterPro" id="IPR018528">
    <property type="entry name" value="Preph_deHydtase_CS"/>
</dbReference>
<dbReference type="NCBIfam" id="NF008865">
    <property type="entry name" value="PRK11898.1"/>
    <property type="match status" value="1"/>
</dbReference>
<dbReference type="PANTHER" id="PTHR21022">
    <property type="entry name" value="PREPHENATE DEHYDRATASE P PROTEIN"/>
    <property type="match status" value="1"/>
</dbReference>
<dbReference type="PANTHER" id="PTHR21022:SF19">
    <property type="entry name" value="PREPHENATE DEHYDRATASE-RELATED"/>
    <property type="match status" value="1"/>
</dbReference>
<dbReference type="Pfam" id="PF01842">
    <property type="entry name" value="ACT"/>
    <property type="match status" value="1"/>
</dbReference>
<dbReference type="Pfam" id="PF00800">
    <property type="entry name" value="PDT"/>
    <property type="match status" value="1"/>
</dbReference>
<dbReference type="PIRSF" id="PIRSF001500">
    <property type="entry name" value="Chor_mut_pdt_Ppr"/>
    <property type="match status" value="1"/>
</dbReference>
<dbReference type="SUPFAM" id="SSF55021">
    <property type="entry name" value="ACT-like"/>
    <property type="match status" value="1"/>
</dbReference>
<dbReference type="SUPFAM" id="SSF53850">
    <property type="entry name" value="Periplasmic binding protein-like II"/>
    <property type="match status" value="1"/>
</dbReference>
<dbReference type="PROSITE" id="PS51671">
    <property type="entry name" value="ACT"/>
    <property type="match status" value="1"/>
</dbReference>
<dbReference type="PROSITE" id="PS00857">
    <property type="entry name" value="PREPHENATE_DEHYDR_1"/>
    <property type="match status" value="1"/>
</dbReference>
<dbReference type="PROSITE" id="PS00858">
    <property type="entry name" value="PREPHENATE_DEHYDR_2"/>
    <property type="match status" value="1"/>
</dbReference>
<dbReference type="PROSITE" id="PS51171">
    <property type="entry name" value="PREPHENATE_DEHYDR_3"/>
    <property type="match status" value="1"/>
</dbReference>
<comment type="catalytic activity">
    <reaction>
        <text>prephenate + H(+) = 3-phenylpyruvate + CO2 + H2O</text>
        <dbReference type="Rhea" id="RHEA:21648"/>
        <dbReference type="ChEBI" id="CHEBI:15377"/>
        <dbReference type="ChEBI" id="CHEBI:15378"/>
        <dbReference type="ChEBI" id="CHEBI:16526"/>
        <dbReference type="ChEBI" id="CHEBI:18005"/>
        <dbReference type="ChEBI" id="CHEBI:29934"/>
        <dbReference type="EC" id="4.2.1.51"/>
    </reaction>
</comment>
<comment type="pathway">
    <text>Amino-acid biosynthesis; L-phenylalanine biosynthesis; phenylpyruvate from prephenate: step 1/1.</text>
</comment>
<comment type="subunit">
    <text evidence="1">Homodimer.</text>
</comment>